<comment type="function">
    <text evidence="1">Associates with the EF-Tu.GDP complex and induces the exchange of GDP to GTP. It remains bound to the aminoacyl-tRNA.EF-Tu.GTP complex up to the GTP hydrolysis stage on the ribosome.</text>
</comment>
<comment type="subcellular location">
    <subcellularLocation>
        <location evidence="1">Cytoplasm</location>
    </subcellularLocation>
</comment>
<comment type="similarity">
    <text evidence="1">Belongs to the EF-Ts family.</text>
</comment>
<reference key="1">
    <citation type="journal article" date="2004" name="Proc. Natl. Acad. Sci. U.S.A.">
        <title>Genomic analysis of Bacteroides fragilis reveals extensive DNA inversions regulating cell surface adaptation.</title>
        <authorList>
            <person name="Kuwahara T."/>
            <person name="Yamashita A."/>
            <person name="Hirakawa H."/>
            <person name="Nakayama H."/>
            <person name="Toh H."/>
            <person name="Okada N."/>
            <person name="Kuhara S."/>
            <person name="Hattori M."/>
            <person name="Hayashi T."/>
            <person name="Ohnishi Y."/>
        </authorList>
    </citation>
    <scope>NUCLEOTIDE SEQUENCE [LARGE SCALE GENOMIC DNA]</scope>
    <source>
        <strain>YCH46</strain>
    </source>
</reference>
<feature type="chain" id="PRO_0000161072" description="Elongation factor Ts">
    <location>
        <begin position="1"/>
        <end position="330"/>
    </location>
</feature>
<feature type="region of interest" description="Involved in Mg(2+) ion dislocation from EF-Tu" evidence="1">
    <location>
        <begin position="79"/>
        <end position="82"/>
    </location>
</feature>
<gene>
    <name evidence="1" type="primary">tsf</name>
    <name type="ordered locus">BF4010</name>
</gene>
<organism>
    <name type="scientific">Bacteroides fragilis (strain YCH46)</name>
    <dbReference type="NCBI Taxonomy" id="295405"/>
    <lineage>
        <taxon>Bacteria</taxon>
        <taxon>Pseudomonadati</taxon>
        <taxon>Bacteroidota</taxon>
        <taxon>Bacteroidia</taxon>
        <taxon>Bacteroidales</taxon>
        <taxon>Bacteroidaceae</taxon>
        <taxon>Bacteroides</taxon>
    </lineage>
</organism>
<keyword id="KW-0963">Cytoplasm</keyword>
<keyword id="KW-0251">Elongation factor</keyword>
<keyword id="KW-0648">Protein biosynthesis</keyword>
<dbReference type="EMBL" id="AP006841">
    <property type="protein sequence ID" value="BAD50752.1"/>
    <property type="molecule type" value="Genomic_DNA"/>
</dbReference>
<dbReference type="RefSeq" id="WP_005791746.1">
    <property type="nucleotide sequence ID" value="NZ_UYXF01000013.1"/>
</dbReference>
<dbReference type="RefSeq" id="YP_101286.1">
    <property type="nucleotide sequence ID" value="NC_006347.1"/>
</dbReference>
<dbReference type="SMR" id="Q64P30"/>
<dbReference type="STRING" id="295405.BF4010"/>
<dbReference type="GeneID" id="60369940"/>
<dbReference type="KEGG" id="bfr:BF4010"/>
<dbReference type="PATRIC" id="fig|295405.11.peg.3859"/>
<dbReference type="HOGENOM" id="CLU_047155_0_0_10"/>
<dbReference type="OrthoDB" id="9808348at2"/>
<dbReference type="Proteomes" id="UP000002197">
    <property type="component" value="Chromosome"/>
</dbReference>
<dbReference type="GO" id="GO:0005737">
    <property type="term" value="C:cytoplasm"/>
    <property type="evidence" value="ECO:0007669"/>
    <property type="project" value="UniProtKB-SubCell"/>
</dbReference>
<dbReference type="GO" id="GO:0003746">
    <property type="term" value="F:translation elongation factor activity"/>
    <property type="evidence" value="ECO:0007669"/>
    <property type="project" value="UniProtKB-UniRule"/>
</dbReference>
<dbReference type="CDD" id="cd14275">
    <property type="entry name" value="UBA_EF-Ts"/>
    <property type="match status" value="1"/>
</dbReference>
<dbReference type="FunFam" id="1.10.8.10:FF:000001">
    <property type="entry name" value="Elongation factor Ts"/>
    <property type="match status" value="1"/>
</dbReference>
<dbReference type="FunFam" id="3.30.479.20:FF:000018">
    <property type="entry name" value="Elongation factor Ts"/>
    <property type="match status" value="1"/>
</dbReference>
<dbReference type="Gene3D" id="1.10.8.10">
    <property type="entry name" value="DNA helicase RuvA subunit, C-terminal domain"/>
    <property type="match status" value="1"/>
</dbReference>
<dbReference type="Gene3D" id="3.30.479.20">
    <property type="entry name" value="Elongation factor Ts, dimerisation domain"/>
    <property type="match status" value="3"/>
</dbReference>
<dbReference type="HAMAP" id="MF_00050">
    <property type="entry name" value="EF_Ts"/>
    <property type="match status" value="1"/>
</dbReference>
<dbReference type="InterPro" id="IPR036402">
    <property type="entry name" value="EF-Ts_dimer_sf"/>
</dbReference>
<dbReference type="InterPro" id="IPR001816">
    <property type="entry name" value="Transl_elong_EFTs/EF1B"/>
</dbReference>
<dbReference type="InterPro" id="IPR014039">
    <property type="entry name" value="Transl_elong_EFTs/EF1B_dimer"/>
</dbReference>
<dbReference type="InterPro" id="IPR018101">
    <property type="entry name" value="Transl_elong_Ts_CS"/>
</dbReference>
<dbReference type="InterPro" id="IPR009060">
    <property type="entry name" value="UBA-like_sf"/>
</dbReference>
<dbReference type="NCBIfam" id="TIGR00116">
    <property type="entry name" value="tsf"/>
    <property type="match status" value="1"/>
</dbReference>
<dbReference type="PANTHER" id="PTHR11741">
    <property type="entry name" value="ELONGATION FACTOR TS"/>
    <property type="match status" value="1"/>
</dbReference>
<dbReference type="PANTHER" id="PTHR11741:SF0">
    <property type="entry name" value="ELONGATION FACTOR TS, MITOCHONDRIAL"/>
    <property type="match status" value="1"/>
</dbReference>
<dbReference type="Pfam" id="PF00889">
    <property type="entry name" value="EF_TS"/>
    <property type="match status" value="1"/>
</dbReference>
<dbReference type="SUPFAM" id="SSF54713">
    <property type="entry name" value="Elongation factor Ts (EF-Ts), dimerisation domain"/>
    <property type="match status" value="2"/>
</dbReference>
<dbReference type="SUPFAM" id="SSF46934">
    <property type="entry name" value="UBA-like"/>
    <property type="match status" value="1"/>
</dbReference>
<dbReference type="PROSITE" id="PS01126">
    <property type="entry name" value="EF_TS_1"/>
    <property type="match status" value="1"/>
</dbReference>
<dbReference type="PROSITE" id="PS01127">
    <property type="entry name" value="EF_TS_2"/>
    <property type="match status" value="1"/>
</dbReference>
<name>EFTS_BACFR</name>
<evidence type="ECO:0000255" key="1">
    <source>
        <dbReference type="HAMAP-Rule" id="MF_00050"/>
    </source>
</evidence>
<sequence length="330" mass="36015">MAVTMADITKLRKMTGAGMMDCKNALTDAEGDFDKAMKIIREKGQAVAAKRSDREASEGCVLVKVEEGFGAIIALKCETDFVAQNADFVKLTQDILDAAVANKCKTLEEVLALPMGDATVAQAVTDRTGITGEKMELDGYMVLEGATIAAYNHMNRNGLCTMVAFNKKVDEQLAKQVAMQVAAMNPIAVDEDGVSEEVKQKEIEVAVEKTKVEQVQKAVEAALKKANINPAHVDSEDHMESNMAKGWITAEDVAKAKEIIATVSAEKAANMPEQMIQNIAKGRLAKFLKEVCLLNQEDIMDAKKTVREVLKEADPELKVVDFKRFTLRAE</sequence>
<protein>
    <recommendedName>
        <fullName evidence="1">Elongation factor Ts</fullName>
        <shortName evidence="1">EF-Ts</shortName>
    </recommendedName>
</protein>
<proteinExistence type="inferred from homology"/>
<accession>Q64P30</accession>